<gene>
    <name evidence="8" type="primary">Bref-PKS</name>
    <name evidence="8" type="synonym">orf7</name>
</gene>
<dbReference type="EC" id="2.3.1.-" evidence="7"/>
<dbReference type="EMBL" id="KJ728786">
    <property type="protein sequence ID" value="AIA58899.1"/>
    <property type="molecule type" value="Genomic_DNA"/>
</dbReference>
<dbReference type="SMR" id="A0A068ABB7"/>
<dbReference type="GO" id="GO:0004312">
    <property type="term" value="F:fatty acid synthase activity"/>
    <property type="evidence" value="ECO:0007669"/>
    <property type="project" value="TreeGrafter"/>
</dbReference>
<dbReference type="GO" id="GO:0016491">
    <property type="term" value="F:oxidoreductase activity"/>
    <property type="evidence" value="ECO:0007669"/>
    <property type="project" value="UniProtKB-KW"/>
</dbReference>
<dbReference type="GO" id="GO:0031177">
    <property type="term" value="F:phosphopantetheine binding"/>
    <property type="evidence" value="ECO:0007669"/>
    <property type="project" value="InterPro"/>
</dbReference>
<dbReference type="GO" id="GO:0006633">
    <property type="term" value="P:fatty acid biosynthetic process"/>
    <property type="evidence" value="ECO:0007669"/>
    <property type="project" value="TreeGrafter"/>
</dbReference>
<dbReference type="GO" id="GO:1901336">
    <property type="term" value="P:lactone biosynthetic process"/>
    <property type="evidence" value="ECO:0007669"/>
    <property type="project" value="UniProtKB-ARBA"/>
</dbReference>
<dbReference type="GO" id="GO:0030639">
    <property type="term" value="P:polyketide biosynthetic process"/>
    <property type="evidence" value="ECO:0007669"/>
    <property type="project" value="UniProtKB-ARBA"/>
</dbReference>
<dbReference type="CDD" id="cd05195">
    <property type="entry name" value="enoyl_red"/>
    <property type="match status" value="1"/>
</dbReference>
<dbReference type="CDD" id="cd00833">
    <property type="entry name" value="PKS"/>
    <property type="match status" value="1"/>
</dbReference>
<dbReference type="FunFam" id="3.40.50.720:FF:000209">
    <property type="entry name" value="Polyketide synthase Pks12"/>
    <property type="match status" value="1"/>
</dbReference>
<dbReference type="Gene3D" id="3.30.70.3290">
    <property type="match status" value="1"/>
</dbReference>
<dbReference type="Gene3D" id="3.40.47.10">
    <property type="match status" value="1"/>
</dbReference>
<dbReference type="Gene3D" id="3.40.366.10">
    <property type="entry name" value="Malonyl-Coenzyme A Acyl Carrier Protein, domain 2"/>
    <property type="match status" value="1"/>
</dbReference>
<dbReference type="Gene3D" id="3.90.180.10">
    <property type="entry name" value="Medium-chain alcohol dehydrogenases, catalytic domain"/>
    <property type="match status" value="1"/>
</dbReference>
<dbReference type="Gene3D" id="3.40.50.720">
    <property type="entry name" value="NAD(P)-binding Rossmann-like Domain"/>
    <property type="match status" value="3"/>
</dbReference>
<dbReference type="Gene3D" id="3.10.129.110">
    <property type="entry name" value="Polyketide synthase dehydratase"/>
    <property type="match status" value="1"/>
</dbReference>
<dbReference type="InterPro" id="IPR001227">
    <property type="entry name" value="Ac_transferase_dom_sf"/>
</dbReference>
<dbReference type="InterPro" id="IPR036736">
    <property type="entry name" value="ACP-like_sf"/>
</dbReference>
<dbReference type="InterPro" id="IPR014043">
    <property type="entry name" value="Acyl_transferase_dom"/>
</dbReference>
<dbReference type="InterPro" id="IPR016035">
    <property type="entry name" value="Acyl_Trfase/lysoPLipase"/>
</dbReference>
<dbReference type="InterPro" id="IPR013154">
    <property type="entry name" value="ADH-like_N"/>
</dbReference>
<dbReference type="InterPro" id="IPR011032">
    <property type="entry name" value="GroES-like_sf"/>
</dbReference>
<dbReference type="InterPro" id="IPR014031">
    <property type="entry name" value="Ketoacyl_synth_C"/>
</dbReference>
<dbReference type="InterPro" id="IPR014030">
    <property type="entry name" value="Ketoacyl_synth_N"/>
</dbReference>
<dbReference type="InterPro" id="IPR016036">
    <property type="entry name" value="Malonyl_transacylase_ACP-bd"/>
</dbReference>
<dbReference type="InterPro" id="IPR036291">
    <property type="entry name" value="NAD(P)-bd_dom_sf"/>
</dbReference>
<dbReference type="InterPro" id="IPR056501">
    <property type="entry name" value="NAD-bd_HRPKS_sdrA"/>
</dbReference>
<dbReference type="InterPro" id="IPR032821">
    <property type="entry name" value="PKS_assoc"/>
</dbReference>
<dbReference type="InterPro" id="IPR020841">
    <property type="entry name" value="PKS_Beta-ketoAc_synthase_dom"/>
</dbReference>
<dbReference type="InterPro" id="IPR042104">
    <property type="entry name" value="PKS_dehydratase_sf"/>
</dbReference>
<dbReference type="InterPro" id="IPR020807">
    <property type="entry name" value="PKS_DH"/>
</dbReference>
<dbReference type="InterPro" id="IPR049551">
    <property type="entry name" value="PKS_DH_C"/>
</dbReference>
<dbReference type="InterPro" id="IPR049552">
    <property type="entry name" value="PKS_DH_N"/>
</dbReference>
<dbReference type="InterPro" id="IPR020843">
    <property type="entry name" value="PKS_ER"/>
</dbReference>
<dbReference type="InterPro" id="IPR013968">
    <property type="entry name" value="PKS_KR"/>
</dbReference>
<dbReference type="InterPro" id="IPR049900">
    <property type="entry name" value="PKS_mFAS_DH"/>
</dbReference>
<dbReference type="InterPro" id="IPR050091">
    <property type="entry name" value="PKS_NRPS_Biosynth_Enz"/>
</dbReference>
<dbReference type="InterPro" id="IPR020806">
    <property type="entry name" value="PKS_PP-bd"/>
</dbReference>
<dbReference type="InterPro" id="IPR009081">
    <property type="entry name" value="PP-bd_ACP"/>
</dbReference>
<dbReference type="InterPro" id="IPR016039">
    <property type="entry name" value="Thiolase-like"/>
</dbReference>
<dbReference type="PANTHER" id="PTHR43775:SF18">
    <property type="entry name" value="ENZYME, PUTATIVE (JCVI)-RELATED"/>
    <property type="match status" value="1"/>
</dbReference>
<dbReference type="PANTHER" id="PTHR43775">
    <property type="entry name" value="FATTY ACID SYNTHASE"/>
    <property type="match status" value="1"/>
</dbReference>
<dbReference type="Pfam" id="PF23297">
    <property type="entry name" value="ACP_SdgA_C"/>
    <property type="match status" value="1"/>
</dbReference>
<dbReference type="Pfam" id="PF00698">
    <property type="entry name" value="Acyl_transf_1"/>
    <property type="match status" value="1"/>
</dbReference>
<dbReference type="Pfam" id="PF08240">
    <property type="entry name" value="ADH_N"/>
    <property type="match status" value="1"/>
</dbReference>
<dbReference type="Pfam" id="PF13602">
    <property type="entry name" value="ADH_zinc_N_2"/>
    <property type="match status" value="1"/>
</dbReference>
<dbReference type="Pfam" id="PF16197">
    <property type="entry name" value="KAsynt_C_assoc"/>
    <property type="match status" value="1"/>
</dbReference>
<dbReference type="Pfam" id="PF00109">
    <property type="entry name" value="ketoacyl-synt"/>
    <property type="match status" value="1"/>
</dbReference>
<dbReference type="Pfam" id="PF02801">
    <property type="entry name" value="Ketoacyl-synt_C"/>
    <property type="match status" value="1"/>
</dbReference>
<dbReference type="Pfam" id="PF08659">
    <property type="entry name" value="KR"/>
    <property type="match status" value="1"/>
</dbReference>
<dbReference type="Pfam" id="PF23114">
    <property type="entry name" value="NAD-bd_HRPKS_sdrA"/>
    <property type="match status" value="1"/>
</dbReference>
<dbReference type="Pfam" id="PF21089">
    <property type="entry name" value="PKS_DH_N"/>
    <property type="match status" value="1"/>
</dbReference>
<dbReference type="Pfam" id="PF14765">
    <property type="entry name" value="PS-DH"/>
    <property type="match status" value="1"/>
</dbReference>
<dbReference type="SMART" id="SM00827">
    <property type="entry name" value="PKS_AT"/>
    <property type="match status" value="1"/>
</dbReference>
<dbReference type="SMART" id="SM00826">
    <property type="entry name" value="PKS_DH"/>
    <property type="match status" value="1"/>
</dbReference>
<dbReference type="SMART" id="SM00829">
    <property type="entry name" value="PKS_ER"/>
    <property type="match status" value="1"/>
</dbReference>
<dbReference type="SMART" id="SM00822">
    <property type="entry name" value="PKS_KR"/>
    <property type="match status" value="1"/>
</dbReference>
<dbReference type="SMART" id="SM00825">
    <property type="entry name" value="PKS_KS"/>
    <property type="match status" value="1"/>
</dbReference>
<dbReference type="SMART" id="SM00823">
    <property type="entry name" value="PKS_PP"/>
    <property type="match status" value="1"/>
</dbReference>
<dbReference type="SUPFAM" id="SSF47336">
    <property type="entry name" value="ACP-like"/>
    <property type="match status" value="1"/>
</dbReference>
<dbReference type="SUPFAM" id="SSF52151">
    <property type="entry name" value="FabD/lysophospholipase-like"/>
    <property type="match status" value="1"/>
</dbReference>
<dbReference type="SUPFAM" id="SSF50129">
    <property type="entry name" value="GroES-like"/>
    <property type="match status" value="1"/>
</dbReference>
<dbReference type="SUPFAM" id="SSF51735">
    <property type="entry name" value="NAD(P)-binding Rossmann-fold domains"/>
    <property type="match status" value="3"/>
</dbReference>
<dbReference type="SUPFAM" id="SSF55048">
    <property type="entry name" value="Probable ACP-binding domain of malonyl-CoA ACP transacylase"/>
    <property type="match status" value="1"/>
</dbReference>
<dbReference type="SUPFAM" id="SSF53901">
    <property type="entry name" value="Thiolase-like"/>
    <property type="match status" value="1"/>
</dbReference>
<dbReference type="PROSITE" id="PS50075">
    <property type="entry name" value="CARRIER"/>
    <property type="match status" value="1"/>
</dbReference>
<dbReference type="PROSITE" id="PS52004">
    <property type="entry name" value="KS3_2"/>
    <property type="match status" value="1"/>
</dbReference>
<dbReference type="PROSITE" id="PS52019">
    <property type="entry name" value="PKS_MFAS_DH"/>
    <property type="match status" value="1"/>
</dbReference>
<proteinExistence type="evidence at protein level"/>
<accession>A0A068ABB7</accession>
<name>BREF7_EUPBR</name>
<organism>
    <name type="scientific">Eupenicillium brefeldianum</name>
    <name type="common">Penicillium brefeldianum</name>
    <dbReference type="NCBI Taxonomy" id="1131482"/>
    <lineage>
        <taxon>Eukaryota</taxon>
        <taxon>Fungi</taxon>
        <taxon>Dikarya</taxon>
        <taxon>Ascomycota</taxon>
        <taxon>Pezizomycotina</taxon>
        <taxon>Eurotiomycetes</taxon>
        <taxon>Eurotiomycetidae</taxon>
        <taxon>Eurotiales</taxon>
        <taxon>Aspergillaceae</taxon>
        <taxon>Penicillium</taxon>
    </lineage>
</organism>
<evidence type="ECO:0000250" key="1">
    <source>
        <dbReference type="UniProtKB" id="Q9Y8A5"/>
    </source>
</evidence>
<evidence type="ECO:0000255" key="2"/>
<evidence type="ECO:0000255" key="3">
    <source>
        <dbReference type="PROSITE-ProRule" id="PRU00258"/>
    </source>
</evidence>
<evidence type="ECO:0000255" key="4">
    <source>
        <dbReference type="PROSITE-ProRule" id="PRU01348"/>
    </source>
</evidence>
<evidence type="ECO:0000255" key="5">
    <source>
        <dbReference type="PROSITE-ProRule" id="PRU01363"/>
    </source>
</evidence>
<evidence type="ECO:0000255" key="6">
    <source>
        <dbReference type="PROSITE-ProRule" id="PRU10022"/>
    </source>
</evidence>
<evidence type="ECO:0000269" key="7">
    <source>
    </source>
</evidence>
<evidence type="ECO:0000303" key="8">
    <source>
    </source>
</evidence>
<evidence type="ECO:0000305" key="9">
    <source>
    </source>
</evidence>
<feature type="chain" id="PRO_0000444935" description="Highly reducing polyketide synthase">
    <location>
        <begin position="1"/>
        <end position="2373"/>
    </location>
</feature>
<feature type="domain" description="Ketosynthase family 3 (KS3)" evidence="4 9">
    <location>
        <begin position="19"/>
        <end position="446"/>
    </location>
</feature>
<feature type="domain" description="PKS/mFAS DH" evidence="5">
    <location>
        <begin position="942"/>
        <end position="1246"/>
    </location>
</feature>
<feature type="domain" description="Carrier" evidence="3 9">
    <location>
        <begin position="2294"/>
        <end position="2370"/>
    </location>
</feature>
<feature type="region of interest" description="Malonyl-CoA:ACP transacylase (MAT) domain" evidence="2 9">
    <location>
        <begin position="560"/>
        <end position="874"/>
    </location>
</feature>
<feature type="region of interest" description="Dehydratase (DH) domain" evidence="2 9">
    <location>
        <begin position="942"/>
        <end position="1241"/>
    </location>
</feature>
<feature type="region of interest" description="N-terminal hotdog fold" evidence="5">
    <location>
        <begin position="942"/>
        <end position="1078"/>
    </location>
</feature>
<feature type="region of interest" description="C-terminal hotdog fold" evidence="5">
    <location>
        <begin position="1090"/>
        <end position="1246"/>
    </location>
</feature>
<feature type="region of interest" description="Enoyl reductase (ER) domain" evidence="2 9">
    <location>
        <begin position="1669"/>
        <end position="1985"/>
    </location>
</feature>
<feature type="region of interest" description="Ketoreductase (KR) domain" evidence="2 9">
    <location>
        <begin position="2010"/>
        <end position="2187"/>
    </location>
</feature>
<feature type="active site" description="For beta-ketoacyl synthase activity" evidence="4">
    <location>
        <position position="192"/>
    </location>
</feature>
<feature type="active site" description="For beta-ketoacyl synthase activity" evidence="4">
    <location>
        <position position="329"/>
    </location>
</feature>
<feature type="active site" description="For beta-ketoacyl synthase activity" evidence="4">
    <location>
        <position position="369"/>
    </location>
</feature>
<feature type="active site" description="For malonyltransferase activity" evidence="6">
    <location>
        <position position="652"/>
    </location>
</feature>
<feature type="active site" description="Proton acceptor; for dehydratase activity" evidence="5">
    <location>
        <position position="974"/>
    </location>
</feature>
<feature type="active site" description="Proton donor; for dehydratase activity" evidence="5">
    <location>
        <position position="1154"/>
    </location>
</feature>
<feature type="modified residue" description="O-(pantetheine 4'-phosphoryl)serine" evidence="3">
    <location>
        <position position="2330"/>
    </location>
</feature>
<protein>
    <recommendedName>
        <fullName evidence="8">Highly reducing polyketide synthase</fullName>
        <shortName evidence="8">HRPKS</shortName>
        <ecNumber evidence="7">2.3.1.-</ecNumber>
    </recommendedName>
    <alternativeName>
        <fullName evidence="8">Brefeldin A biosynthesis cluster protein</fullName>
    </alternativeName>
</protein>
<keyword id="KW-0012">Acyltransferase</keyword>
<keyword id="KW-0511">Multifunctional enzyme</keyword>
<keyword id="KW-0521">NADP</keyword>
<keyword id="KW-0560">Oxidoreductase</keyword>
<keyword id="KW-0596">Phosphopantetheine</keyword>
<keyword id="KW-0597">Phosphoprotein</keyword>
<keyword id="KW-0808">Transferase</keyword>
<comment type="function">
    <text evidence="7">Highly reducing polyketide synthase; part of the gene cluster that mediates the biosynthesis of brefeldin A (BFA), a protein transport inhibitor that shows antiviral, antifungal, and antitumor properties (PubMed:24845309). The proposed biosynthesis of BFA involves formation of an acyclic polyketide chain that is differentially tailored throughout the backbone (PubMed:24845309). The highly reducing polyketide synthase Bref-PKS is proposed to synthesize the precisely reduced octaketide precursor, which could then be directly offloaded by the thiohydrolase enzyme Bref-TH followed by a cytochrome P450 monooxygenase-mediated formation of the cyclopentane ring and macrocyclization to afford 7-deoxy BFA. Alternatively, the first ring annulation can also occur on the ACP-tethered intermediate before the thiohydrolase release and lactonization (PubMed:24845309). The C7-hydroxylation by another cytochrome P450 monooxygenase is believed to be the final step in the process to obtain the final structure of BFA (PubMed:24845309). In addition to the HRPKS Bref-PKS and the thiohydrolase Bref-TH, the brefeldin A biosynthesis cluster contains 4 cytochrome p450 monooxygenases (called orf3 to orf6), as well a the probable cluster-specific transcription regulator orf8 (PubMed:24845309).</text>
</comment>
<comment type="cofactor">
    <cofactor evidence="1">
        <name>pantetheine 4'-phosphate</name>
        <dbReference type="ChEBI" id="CHEBI:47942"/>
    </cofactor>
    <text evidence="1">Binds 1 phosphopantetheine covalently.</text>
</comment>
<comment type="pathway">
    <text evidence="7">Mycotoxin biosynthesis.</text>
</comment>
<comment type="induction">
    <text evidence="7">Coexpressed with the other cluster genes on brefeldin A production optimized medium.</text>
</comment>
<comment type="domain">
    <text evidence="9">Multidomain protein; including a ketosynthase (KS) that catalyzes repeated decarboxylative condensation to elongate the polyketide backbone; a malonyl-CoA:ACP transacylase (MAT) that selects and transfers the extender unit malonyl-CoA; a dehydratase (DH) domain that reduces hydroxyl groups to enoyl groups; an enoylreductase (ER) domain that reduces enoyl groups to alkyl group; a ketoreductase (KR) domain that catalyzes beta-ketoreduction steps; and an acyl-carrier protein (ACP) that serves as the tether of the growing and completed polyketide via its phosphopantetheinyl arm.</text>
</comment>
<sequence>MAPHNSLDDTPLSSRTFIQEPIAVVGIACRLPGHSSTPKKLWDFLERGGIAANDTPSTRFNLAAHHDGSKKPKTMRTPGGMFIEDADPRDFDAGFFGISGADAAAMDPQQRQLMEVVYECLENSGVPFEKLYGAQVACHVGSYAVDYDAIQARDPEDRAPGAVVGIGRAMLSNRISHFFNFKGPSMTIDTACSGSLVGLDVACRYLHTGEVDGAIIGGANMYFSPEHNLNTGAMSVANSLSGRCHTFDVKADGYCKAEAINCVYLKRLSDAVRDGDPIRAVIRGSATNSDGNTPGIASPNSAAQAAAIRSAYANAGITNLNDTSYLEFHGTGTQAGDPLEAGGVASVFSASRKPEAPLYIGSVKSNIGHSEPAAGISGLIKAILSIEKDLIPGNPTFITPTPKIDFEGLKLQPSRANRRWPAAPFKRASVNSFGYGGSNAHVIVEEPKVLLPDMESTYVSSYQTEADLFADDEEVAGGRLQLLVLSANDEASLRANATTLKNYLTNPNVKISLGDLSHTLSERRSHHFHRGYLITDKASIDENALVIGKKSTNEPRVGFIFTGQGAQWPQMGKAIIDTFPEARAVVLELDEFLQSSSLPPSWSLLGELTEPREAEHLRKPEFSQPLVTALQIALFDILQRWGISPRAVAGHSSGEIAAAYAAGLLSKKAAIRAAYYRGQAAALAEKGTADQNQQAFGMMATGIGAEGITPYLQGLGQSVQIACYNSPSSLTLSGTVDALAKVQKQLSEDSIFARMLQVNLAYHSTFMREISQGYTDLLNKDFEHLPFKQDSVRMFSSVTGEQLAGPTDSEYWKSNMVCPVRFDAALSNMLTASDAPDFLIELGPAGALKGPISQVLKSLEGTKAQYTSAMARGAADMQSIFAVAGSLYVAGGKVDLAQVNKVDGIKPKVVIDLPNYSWNHSTKYWYESESSKDWRNRLFPPHDLLGSKVLGSPWRSPAFMRSLNVQDLPWIADHKMGPDTVFPATGYISMAMEAIYQRSEALHMLEGEKKVENPRYRLRDVQFKKALVLPDNQSTRMSLTLSAYTGVGDWFEFKVSSLAGTTWIEHVRGLIRIDEDVPQVASAEEIKPLSHQVDASLWHKCMLDAGYSFGPKFLKQLQIEARPGSRRSRSILGLEVPESKYPQSKYPMHPAAMDGCFQTCAPSLWKGNRHAVNAVLVPAMIDSLTITSSKADRGLSLTSAAYVGLGRPTDNKNYMSNASVYDPETGNLLLRLSGLRYTRIDTGPSVYDAHTFSALISKPDVSLLSSQSLENLAEREQGLNDRSFGVATELVRLAAHKKPAQRVLELNFVPGLSQSIWASAIEGQDNIGKTYRQFVYRLTDPKALVEAGQQYTSEKMEISLLDPEGMTLAEDEFDLVVVRLSPAADNVEHVATQLKKVVKEGGQVLFIRQRSVQNSEVIVNGEAEQFDNGSYADLLKSAGLTFAGHVAFEEGNEFASLSLCRVQPEPDCTGKDVAIYHFVEPSTSALKVITALKARGWNVTTYRAEEASTSPKRFLVLDELDTALLPTLSPAHWDSLKILLSLDKRVLWVTNGSQTVISEPNKAMIHGLGRTVRAEDPLVQLTTLDVSASSTDATVDSVEVILERLALPEVFHHVESEFIERNGLLHINRIQPDDQVNAVASDSYEGSEPVEQSLHDSPNMIRLRCERVGTTDSLIYSEVSPYELPLDDNKVEVEVYAAGLNYKDVVITMGIVPENEHILGLEGAGIVRRLGKNVHKVRKLDIGQRVLVFKKGAFANRVHAEAERVYPIQDSMTFEETCTLASSYLTGIHSLFNLADTKAGSKVLIHSASGGLGLACIQLCQYVGAEVFATCGNKEKRDFLVKHAGIPADHIFNSRDTSFGAAIMAATNGYGVDTILNSLTGDLLDESWRCIAAEGTMVELGKRDMLDRKGLSMEPFGRNASYRCFDMGHDIVSDAMINNLLKRLFALLEAGHVKPVHVATTFGWDNVSGAMRYMRSANHIGKIVISSGDKPIIVPVRPSRAPLQLRGEAGYLLIGGLKGLCGSVAVNLASLGAKHIVVMARSGYDDEVSQRVITDLAALGCTITLGQGDVSKADDVRRVIKQSPVPIGGVIQGAMVLRDRVFTDMSIEEYHAAVDCKVAGTWNIHNALIEENMKVEFFTMLSSVSGVVGQKGQANYAAANAFLDAFAIYRHNLGLAGNSVDLGAIQDVGYMSHHVDLLENLSSDAWTPINEALMLKIVEFSLKQQLTPISKASAGQLITSIAVPQRENSSLLRDARFSTLSFSDGEDVGAGSDGKDAGIQALQLLVKNKAAVSAIHDAVIDVTVRQFTTMLSLSEPMEPAKAPSSYGLDSLAAVEFRNWVRLELKAEVTTLDIISATSLEQLAQKIVARLTAV</sequence>
<reference key="1">
    <citation type="journal article" date="2014" name="ACS Chem. Biol.">
        <title>Fungal polyketide synthase product chain-length control by partnering thiohydrolase.</title>
        <authorList>
            <person name="Zabala A.O."/>
            <person name="Chooi Y.H."/>
            <person name="Choi M.S."/>
            <person name="Lin H.C."/>
            <person name="Tang Y."/>
        </authorList>
    </citation>
    <scope>NUCLEOTIDE SEQUENCE [GENOMIC DNA]</scope>
    <scope>INDUCTION</scope>
    <scope>FUNCTION</scope>
    <scope>CATALYTIC ACTIVITY</scope>
    <scope>DOMAIN</scope>
    <scope>PATHWAY</scope>
    <source>
        <strain>ATCC 58665</strain>
    </source>
</reference>